<dbReference type="EC" id="2.3.1.234" evidence="1"/>
<dbReference type="EMBL" id="CP001601">
    <property type="protein sequence ID" value="ACP32065.1"/>
    <property type="molecule type" value="Genomic_DNA"/>
</dbReference>
<dbReference type="RefSeq" id="WP_010189477.1">
    <property type="nucleotide sequence ID" value="NC_012590.1"/>
</dbReference>
<dbReference type="SMR" id="C3PL61"/>
<dbReference type="STRING" id="548476.cauri_0468"/>
<dbReference type="GeneID" id="31923086"/>
<dbReference type="KEGG" id="car:cauri_0468"/>
<dbReference type="eggNOG" id="COG0533">
    <property type="taxonomic scope" value="Bacteria"/>
</dbReference>
<dbReference type="HOGENOM" id="CLU_023208_0_2_11"/>
<dbReference type="OrthoDB" id="9806197at2"/>
<dbReference type="Proteomes" id="UP000002077">
    <property type="component" value="Chromosome"/>
</dbReference>
<dbReference type="GO" id="GO:0005737">
    <property type="term" value="C:cytoplasm"/>
    <property type="evidence" value="ECO:0007669"/>
    <property type="project" value="UniProtKB-SubCell"/>
</dbReference>
<dbReference type="GO" id="GO:0005506">
    <property type="term" value="F:iron ion binding"/>
    <property type="evidence" value="ECO:0007669"/>
    <property type="project" value="UniProtKB-UniRule"/>
</dbReference>
<dbReference type="GO" id="GO:0061711">
    <property type="term" value="F:N(6)-L-threonylcarbamoyladenine synthase activity"/>
    <property type="evidence" value="ECO:0007669"/>
    <property type="project" value="UniProtKB-EC"/>
</dbReference>
<dbReference type="GO" id="GO:0002949">
    <property type="term" value="P:tRNA threonylcarbamoyladenosine modification"/>
    <property type="evidence" value="ECO:0007669"/>
    <property type="project" value="UniProtKB-UniRule"/>
</dbReference>
<dbReference type="CDD" id="cd24133">
    <property type="entry name" value="ASKHA_NBD_TsaD_bac"/>
    <property type="match status" value="1"/>
</dbReference>
<dbReference type="FunFam" id="3.30.420.40:FF:000040">
    <property type="entry name" value="tRNA N6-adenosine threonylcarbamoyltransferase"/>
    <property type="match status" value="1"/>
</dbReference>
<dbReference type="Gene3D" id="3.30.420.40">
    <property type="match status" value="2"/>
</dbReference>
<dbReference type="HAMAP" id="MF_01445">
    <property type="entry name" value="TsaD"/>
    <property type="match status" value="1"/>
</dbReference>
<dbReference type="InterPro" id="IPR043129">
    <property type="entry name" value="ATPase_NBD"/>
</dbReference>
<dbReference type="InterPro" id="IPR000905">
    <property type="entry name" value="Gcp-like_dom"/>
</dbReference>
<dbReference type="InterPro" id="IPR017861">
    <property type="entry name" value="KAE1/TsaD"/>
</dbReference>
<dbReference type="InterPro" id="IPR017860">
    <property type="entry name" value="Peptidase_M22_CS"/>
</dbReference>
<dbReference type="InterPro" id="IPR022450">
    <property type="entry name" value="TsaD"/>
</dbReference>
<dbReference type="NCBIfam" id="TIGR00329">
    <property type="entry name" value="gcp_kae1"/>
    <property type="match status" value="1"/>
</dbReference>
<dbReference type="NCBIfam" id="TIGR03723">
    <property type="entry name" value="T6A_TsaD_YgjD"/>
    <property type="match status" value="1"/>
</dbReference>
<dbReference type="PANTHER" id="PTHR11735">
    <property type="entry name" value="TRNA N6-ADENOSINE THREONYLCARBAMOYLTRANSFERASE"/>
    <property type="match status" value="1"/>
</dbReference>
<dbReference type="PANTHER" id="PTHR11735:SF6">
    <property type="entry name" value="TRNA N6-ADENOSINE THREONYLCARBAMOYLTRANSFERASE, MITOCHONDRIAL"/>
    <property type="match status" value="1"/>
</dbReference>
<dbReference type="Pfam" id="PF00814">
    <property type="entry name" value="TsaD"/>
    <property type="match status" value="1"/>
</dbReference>
<dbReference type="PRINTS" id="PR00789">
    <property type="entry name" value="OSIALOPTASE"/>
</dbReference>
<dbReference type="SUPFAM" id="SSF53067">
    <property type="entry name" value="Actin-like ATPase domain"/>
    <property type="match status" value="2"/>
</dbReference>
<dbReference type="PROSITE" id="PS01016">
    <property type="entry name" value="GLYCOPROTEASE"/>
    <property type="match status" value="1"/>
</dbReference>
<reference key="1">
    <citation type="journal article" date="2010" name="BMC Genomics">
        <title>Complete genome sequence and lifestyle of black-pigmented Corynebacterium aurimucosum ATCC 700975 (formerly C. nigricans CN-1) isolated from a vaginal swab of a woman with spontaneous abortion.</title>
        <authorList>
            <person name="Trost E."/>
            <person name="Gotker S."/>
            <person name="Schneider J."/>
            <person name="Schneiker-Bekel S."/>
            <person name="Szczepanowski R."/>
            <person name="Tilker A."/>
            <person name="Viehoever P."/>
            <person name="Arnold W."/>
            <person name="Bekel T."/>
            <person name="Blom J."/>
            <person name="Gartemann K.H."/>
            <person name="Linke B."/>
            <person name="Goesmann A."/>
            <person name="Puhler A."/>
            <person name="Shukla S.K."/>
            <person name="Tauch A."/>
        </authorList>
    </citation>
    <scope>NUCLEOTIDE SEQUENCE [LARGE SCALE GENOMIC DNA]</scope>
    <source>
        <strain>ATCC 700975 / DSM 44827 / CIP 107346 / CN-1</strain>
    </source>
</reference>
<name>TSAD_CORA7</name>
<comment type="function">
    <text evidence="1">Required for the formation of a threonylcarbamoyl group on adenosine at position 37 (t(6)A37) in tRNAs that read codons beginning with adenine. Is involved in the transfer of the threonylcarbamoyl moiety of threonylcarbamoyl-AMP (TC-AMP) to the N6 group of A37, together with TsaE and TsaB. TsaD likely plays a direct catalytic role in this reaction.</text>
</comment>
<comment type="catalytic activity">
    <reaction evidence="1">
        <text>L-threonylcarbamoyladenylate + adenosine(37) in tRNA = N(6)-L-threonylcarbamoyladenosine(37) in tRNA + AMP + H(+)</text>
        <dbReference type="Rhea" id="RHEA:37059"/>
        <dbReference type="Rhea" id="RHEA-COMP:10162"/>
        <dbReference type="Rhea" id="RHEA-COMP:10163"/>
        <dbReference type="ChEBI" id="CHEBI:15378"/>
        <dbReference type="ChEBI" id="CHEBI:73682"/>
        <dbReference type="ChEBI" id="CHEBI:74411"/>
        <dbReference type="ChEBI" id="CHEBI:74418"/>
        <dbReference type="ChEBI" id="CHEBI:456215"/>
        <dbReference type="EC" id="2.3.1.234"/>
    </reaction>
</comment>
<comment type="cofactor">
    <cofactor evidence="1">
        <name>Fe(2+)</name>
        <dbReference type="ChEBI" id="CHEBI:29033"/>
    </cofactor>
    <text evidence="1">Binds 1 Fe(2+) ion per subunit.</text>
</comment>
<comment type="subcellular location">
    <subcellularLocation>
        <location evidence="1">Cytoplasm</location>
    </subcellularLocation>
</comment>
<comment type="similarity">
    <text evidence="1">Belongs to the KAE1 / TsaD family.</text>
</comment>
<protein>
    <recommendedName>
        <fullName evidence="1">tRNA N6-adenosine threonylcarbamoyltransferase</fullName>
        <ecNumber evidence="1">2.3.1.234</ecNumber>
    </recommendedName>
    <alternativeName>
        <fullName evidence="1">N6-L-threonylcarbamoyladenine synthase</fullName>
        <shortName evidence="1">t(6)A synthase</shortName>
    </alternativeName>
    <alternativeName>
        <fullName evidence="1">t(6)A37 threonylcarbamoyladenosine biosynthesis protein TsaD</fullName>
    </alternativeName>
    <alternativeName>
        <fullName evidence="1">tRNA threonylcarbamoyladenosine biosynthesis protein TsaD</fullName>
    </alternativeName>
</protein>
<sequence length="349" mass="35994">MLILGIESSCDETGVGIIELSDNGHMEIRADVVASSMEQHARFGGVVPEIASRAHLEAMPQVMKAALEEAGVEKPDAVAATVGPGLAGALLVGASAAKAFASAWGVPFYGVNHLGGHVAVANLEGEELPHSVALLVSGGHTQLLEVEAVGKPMKELGTTLDDAAGEAYDKVSRLLGLGYPGGPVIDKLAAQGKPTIDLPRGLSKAEDLRGPNRHNFSFSGLKTAVARHVEKAEREGTTVQVEDLCASFQEAVADVLTAKAVRACQDTGAKVLLLGGGVAANSRLRALAAKRCESAGIELRVPRFKLCTDNGVMIAAVAAQLIHEGAEPSGLACGTDTQLEVEVPLVAAR</sequence>
<evidence type="ECO:0000255" key="1">
    <source>
        <dbReference type="HAMAP-Rule" id="MF_01445"/>
    </source>
</evidence>
<feature type="chain" id="PRO_1000184959" description="tRNA N6-adenosine threonylcarbamoyltransferase">
    <location>
        <begin position="1"/>
        <end position="349"/>
    </location>
</feature>
<feature type="binding site" evidence="1">
    <location>
        <position position="113"/>
    </location>
    <ligand>
        <name>Fe cation</name>
        <dbReference type="ChEBI" id="CHEBI:24875"/>
    </ligand>
</feature>
<feature type="binding site" evidence="1">
    <location>
        <position position="117"/>
    </location>
    <ligand>
        <name>Fe cation</name>
        <dbReference type="ChEBI" id="CHEBI:24875"/>
    </ligand>
</feature>
<feature type="binding site" evidence="1">
    <location>
        <begin position="135"/>
        <end position="139"/>
    </location>
    <ligand>
        <name>substrate</name>
    </ligand>
</feature>
<feature type="binding site" evidence="1">
    <location>
        <position position="169"/>
    </location>
    <ligand>
        <name>substrate</name>
    </ligand>
</feature>
<feature type="binding site" evidence="1">
    <location>
        <position position="182"/>
    </location>
    <ligand>
        <name>substrate</name>
    </ligand>
</feature>
<feature type="binding site" evidence="1">
    <location>
        <position position="186"/>
    </location>
    <ligand>
        <name>substrate</name>
    </ligand>
</feature>
<feature type="binding site" evidence="1">
    <location>
        <position position="281"/>
    </location>
    <ligand>
        <name>substrate</name>
    </ligand>
</feature>
<feature type="binding site" evidence="1">
    <location>
        <position position="309"/>
    </location>
    <ligand>
        <name>Fe cation</name>
        <dbReference type="ChEBI" id="CHEBI:24875"/>
    </ligand>
</feature>
<gene>
    <name evidence="1" type="primary">tsaD</name>
    <name type="synonym">gcp</name>
    <name type="ordered locus">cauri_0468</name>
</gene>
<proteinExistence type="inferred from homology"/>
<accession>C3PL61</accession>
<keyword id="KW-0012">Acyltransferase</keyword>
<keyword id="KW-0963">Cytoplasm</keyword>
<keyword id="KW-0408">Iron</keyword>
<keyword id="KW-0479">Metal-binding</keyword>
<keyword id="KW-1185">Reference proteome</keyword>
<keyword id="KW-0808">Transferase</keyword>
<keyword id="KW-0819">tRNA processing</keyword>
<organism>
    <name type="scientific">Corynebacterium aurimucosum (strain ATCC 700975 / DSM 44827 / CIP 107346 / CN-1)</name>
    <name type="common">Corynebacterium nigricans</name>
    <dbReference type="NCBI Taxonomy" id="548476"/>
    <lineage>
        <taxon>Bacteria</taxon>
        <taxon>Bacillati</taxon>
        <taxon>Actinomycetota</taxon>
        <taxon>Actinomycetes</taxon>
        <taxon>Mycobacteriales</taxon>
        <taxon>Corynebacteriaceae</taxon>
        <taxon>Corynebacterium</taxon>
    </lineage>
</organism>